<organism>
    <name type="scientific">Staphylococcus aureus (strain NCTC 8325 / PS 47)</name>
    <dbReference type="NCBI Taxonomy" id="93061"/>
    <lineage>
        <taxon>Bacteria</taxon>
        <taxon>Bacillati</taxon>
        <taxon>Bacillota</taxon>
        <taxon>Bacilli</taxon>
        <taxon>Bacillales</taxon>
        <taxon>Staphylococcaceae</taxon>
        <taxon>Staphylococcus</taxon>
    </lineage>
</organism>
<reference key="1">
    <citation type="book" date="2006" name="Gram positive pathogens, 2nd edition">
        <title>The Staphylococcus aureus NCTC 8325 genome.</title>
        <editorList>
            <person name="Fischetti V."/>
            <person name="Novick R."/>
            <person name="Ferretti J."/>
            <person name="Portnoy D."/>
            <person name="Rood J."/>
        </editorList>
        <authorList>
            <person name="Gillaspy A.F."/>
            <person name="Worrell V."/>
            <person name="Orvis J."/>
            <person name="Roe B.A."/>
            <person name="Dyer D.W."/>
            <person name="Iandolo J.J."/>
        </authorList>
    </citation>
    <scope>NUCLEOTIDE SEQUENCE [LARGE SCALE GENOMIC DNA]</scope>
    <source>
        <strain>NCTC 8325 / PS 47</strain>
    </source>
</reference>
<gene>
    <name type="ordered locus">SAOUHSC_00891</name>
</gene>
<keyword id="KW-0413">Isomerase</keyword>
<keyword id="KW-1185">Reference proteome</keyword>
<keyword id="KW-0697">Rotamase</keyword>
<protein>
    <recommendedName>
        <fullName>Putative peptidyl-prolyl cis-trans isomerase</fullName>
        <shortName>PPIase</shortName>
        <ecNumber>5.2.1.8</ecNumber>
    </recommendedName>
    <alternativeName>
        <fullName>Rotamase</fullName>
    </alternativeName>
</protein>
<proteinExistence type="inferred from homology"/>
<accession>Q2FZU9</accession>
<sequence>MANYPQLNKEVQQGEIKVVMHTNKGDMTFKLFPNIAPKTVENFVTHAKNGYYDGITFHRVINDFMIQGGDPTATGMGGESIYGGAFEDEFSLNAFNLYGALSMANSGPNTNGSQFFIVQMKEVPQNMLSQLADGGWPQPIVDAYGEKGGTPWLDQKHTVFGQIIDGETTLEDIANTKVGPQDKPLHDVVIESIDVEE</sequence>
<feature type="chain" id="PRO_0000299080" description="Putative peptidyl-prolyl cis-trans isomerase">
    <location>
        <begin position="1"/>
        <end position="197"/>
    </location>
</feature>
<feature type="domain" description="PPIase cyclophilin-type" evidence="2">
    <location>
        <begin position="14"/>
        <end position="195"/>
    </location>
</feature>
<comment type="function">
    <text evidence="1">PPIases accelerate the folding of proteins. It catalyzes the cis-trans isomerization of proline imidic peptide bonds in oligopeptides (By similarity).</text>
</comment>
<comment type="catalytic activity">
    <reaction>
        <text>[protein]-peptidylproline (omega=180) = [protein]-peptidylproline (omega=0)</text>
        <dbReference type="Rhea" id="RHEA:16237"/>
        <dbReference type="Rhea" id="RHEA-COMP:10747"/>
        <dbReference type="Rhea" id="RHEA-COMP:10748"/>
        <dbReference type="ChEBI" id="CHEBI:83833"/>
        <dbReference type="ChEBI" id="CHEBI:83834"/>
        <dbReference type="EC" id="5.2.1.8"/>
    </reaction>
</comment>
<comment type="similarity">
    <text evidence="3">Belongs to the cyclophilin-type PPIase family.</text>
</comment>
<name>PPI1_STAA8</name>
<dbReference type="EC" id="5.2.1.8"/>
<dbReference type="EMBL" id="CP000253">
    <property type="protein sequence ID" value="ABD30016.1"/>
    <property type="molecule type" value="Genomic_DNA"/>
</dbReference>
<dbReference type="RefSeq" id="WP_000035058.1">
    <property type="nucleotide sequence ID" value="NZ_LS483365.1"/>
</dbReference>
<dbReference type="RefSeq" id="YP_499444.1">
    <property type="nucleotide sequence ID" value="NC_007795.1"/>
</dbReference>
<dbReference type="SMR" id="Q2FZU9"/>
<dbReference type="STRING" id="93061.SAOUHSC_00891"/>
<dbReference type="PaxDb" id="1280-SAXN108_0949"/>
<dbReference type="GeneID" id="3921737"/>
<dbReference type="KEGG" id="sao:SAOUHSC_00891"/>
<dbReference type="PATRIC" id="fig|93061.5.peg.811"/>
<dbReference type="eggNOG" id="COG0652">
    <property type="taxonomic scope" value="Bacteria"/>
</dbReference>
<dbReference type="HOGENOM" id="CLU_012062_16_0_9"/>
<dbReference type="OrthoDB" id="9807797at2"/>
<dbReference type="PRO" id="PR:Q2FZU9"/>
<dbReference type="Proteomes" id="UP000008816">
    <property type="component" value="Chromosome"/>
</dbReference>
<dbReference type="GO" id="GO:0003755">
    <property type="term" value="F:peptidyl-prolyl cis-trans isomerase activity"/>
    <property type="evidence" value="ECO:0000318"/>
    <property type="project" value="GO_Central"/>
</dbReference>
<dbReference type="GO" id="GO:0006457">
    <property type="term" value="P:protein folding"/>
    <property type="evidence" value="ECO:0000318"/>
    <property type="project" value="GO_Central"/>
</dbReference>
<dbReference type="Gene3D" id="2.40.100.10">
    <property type="entry name" value="Cyclophilin-like"/>
    <property type="match status" value="1"/>
</dbReference>
<dbReference type="InterPro" id="IPR029000">
    <property type="entry name" value="Cyclophilin-like_dom_sf"/>
</dbReference>
<dbReference type="InterPro" id="IPR024936">
    <property type="entry name" value="Cyclophilin-type_PPIase"/>
</dbReference>
<dbReference type="InterPro" id="IPR002130">
    <property type="entry name" value="Cyclophilin-type_PPIase_dom"/>
</dbReference>
<dbReference type="InterPro" id="IPR044666">
    <property type="entry name" value="Cyclophilin_A-like"/>
</dbReference>
<dbReference type="PANTHER" id="PTHR45625">
    <property type="entry name" value="PEPTIDYL-PROLYL CIS-TRANS ISOMERASE-RELATED"/>
    <property type="match status" value="1"/>
</dbReference>
<dbReference type="PANTHER" id="PTHR45625:SF4">
    <property type="entry name" value="PEPTIDYLPROLYL ISOMERASE DOMAIN AND WD REPEAT-CONTAINING PROTEIN 1"/>
    <property type="match status" value="1"/>
</dbReference>
<dbReference type="Pfam" id="PF00160">
    <property type="entry name" value="Pro_isomerase"/>
    <property type="match status" value="1"/>
</dbReference>
<dbReference type="PIRSF" id="PIRSF001467">
    <property type="entry name" value="Peptidylpro_ismrse"/>
    <property type="match status" value="1"/>
</dbReference>
<dbReference type="PRINTS" id="PR00153">
    <property type="entry name" value="CSAPPISMRASE"/>
</dbReference>
<dbReference type="SUPFAM" id="SSF50891">
    <property type="entry name" value="Cyclophilin-like"/>
    <property type="match status" value="1"/>
</dbReference>
<dbReference type="PROSITE" id="PS50072">
    <property type="entry name" value="CSA_PPIASE_2"/>
    <property type="match status" value="1"/>
</dbReference>
<evidence type="ECO:0000250" key="1"/>
<evidence type="ECO:0000255" key="2">
    <source>
        <dbReference type="PROSITE-ProRule" id="PRU00156"/>
    </source>
</evidence>
<evidence type="ECO:0000305" key="3"/>